<keyword id="KW-0903">Direct protein sequencing</keyword>
<keyword id="KW-0256">Endoplasmic reticulum</keyword>
<keyword id="KW-0276">Fatty acid metabolism</keyword>
<keyword id="KW-0443">Lipid metabolism</keyword>
<keyword id="KW-0472">Membrane</keyword>
<keyword id="KW-0492">Microsome</keyword>
<keyword id="KW-0520">NAD</keyword>
<keyword id="KW-0560">Oxidoreductase</keyword>
<keyword id="KW-0597">Phosphoprotein</keyword>
<keyword id="KW-1185">Reference proteome</keyword>
<keyword id="KW-0812">Transmembrane</keyword>
<keyword id="KW-1133">Transmembrane helix</keyword>
<evidence type="ECO:0000250" key="1"/>
<evidence type="ECO:0000250" key="2">
    <source>
        <dbReference type="UniProtKB" id="P47740"/>
    </source>
</evidence>
<evidence type="ECO:0000250" key="3">
    <source>
        <dbReference type="UniProtKB" id="P51648"/>
    </source>
</evidence>
<evidence type="ECO:0000255" key="4"/>
<evidence type="ECO:0000255" key="5">
    <source>
        <dbReference type="PROSITE-ProRule" id="PRU10007"/>
    </source>
</evidence>
<evidence type="ECO:0000255" key="6">
    <source>
        <dbReference type="PROSITE-ProRule" id="PRU10008"/>
    </source>
</evidence>
<evidence type="ECO:0000269" key="7">
    <source>
    </source>
</evidence>
<evidence type="ECO:0000305" key="8"/>
<evidence type="ECO:0000305" key="9">
    <source>
    </source>
</evidence>
<gene>
    <name type="primary">Aldh3a2</name>
    <name type="synonym">Aldh4</name>
</gene>
<dbReference type="EC" id="1.2.1.3" evidence="2"/>
<dbReference type="EC" id="1.2.1.94" evidence="3"/>
<dbReference type="EMBL" id="M73714">
    <property type="protein sequence ID" value="AAA41555.1"/>
    <property type="molecule type" value="mRNA"/>
</dbReference>
<dbReference type="PIR" id="A41028">
    <property type="entry name" value="A41028"/>
</dbReference>
<dbReference type="RefSeq" id="NP_113919.2">
    <property type="nucleotide sequence ID" value="NM_031731.2"/>
</dbReference>
<dbReference type="SMR" id="P30839"/>
<dbReference type="FunCoup" id="P30839">
    <property type="interactions" value="1621"/>
</dbReference>
<dbReference type="IntAct" id="P30839">
    <property type="interactions" value="1"/>
</dbReference>
<dbReference type="STRING" id="10116.ENSRNOP00000070512"/>
<dbReference type="CarbonylDB" id="P30839"/>
<dbReference type="iPTMnet" id="P30839"/>
<dbReference type="PhosphoSitePlus" id="P30839"/>
<dbReference type="SwissPalm" id="P30839"/>
<dbReference type="jPOST" id="P30839"/>
<dbReference type="PaxDb" id="10116-ENSRNOP00000061762"/>
<dbReference type="GeneID" id="65183"/>
<dbReference type="KEGG" id="rno:65183"/>
<dbReference type="UCSC" id="RGD:61866">
    <property type="organism name" value="rat"/>
</dbReference>
<dbReference type="AGR" id="RGD:61866"/>
<dbReference type="CTD" id="224"/>
<dbReference type="RGD" id="61866">
    <property type="gene designation" value="Aldh3a2"/>
</dbReference>
<dbReference type="eggNOG" id="KOG2456">
    <property type="taxonomic scope" value="Eukaryota"/>
</dbReference>
<dbReference type="InParanoid" id="P30839"/>
<dbReference type="OrthoDB" id="440325at2759"/>
<dbReference type="PhylomeDB" id="P30839"/>
<dbReference type="Reactome" id="R-RNO-389599">
    <property type="pathway name" value="Alpha-oxidation of phytanate"/>
</dbReference>
<dbReference type="Reactome" id="R-RNO-9603798">
    <property type="pathway name" value="Class I peroxisomal membrane protein import"/>
</dbReference>
<dbReference type="Reactome" id="R-RNO-9609523">
    <property type="pathway name" value="Insertion of tail-anchored proteins into the endoplasmic reticulum membrane"/>
</dbReference>
<dbReference type="Reactome" id="R-RNO-9696270">
    <property type="pathway name" value="RND2 GTPase cycle"/>
</dbReference>
<dbReference type="Reactome" id="R-RNO-9696273">
    <property type="pathway name" value="RND1 GTPase cycle"/>
</dbReference>
<dbReference type="Reactome" id="R-RNO-9845614">
    <property type="pathway name" value="Sphingolipid catabolism"/>
</dbReference>
<dbReference type="PRO" id="PR:P30839"/>
<dbReference type="Proteomes" id="UP000002494">
    <property type="component" value="Unplaced"/>
</dbReference>
<dbReference type="GO" id="GO:0005737">
    <property type="term" value="C:cytoplasm"/>
    <property type="evidence" value="ECO:0000318"/>
    <property type="project" value="GO_Central"/>
</dbReference>
<dbReference type="GO" id="GO:0005783">
    <property type="term" value="C:endoplasmic reticulum"/>
    <property type="evidence" value="ECO:0000314"/>
    <property type="project" value="HGNC-UCL"/>
</dbReference>
<dbReference type="GO" id="GO:0005789">
    <property type="term" value="C:endoplasmic reticulum membrane"/>
    <property type="evidence" value="ECO:0000314"/>
    <property type="project" value="RGD"/>
</dbReference>
<dbReference type="GO" id="GO:0043231">
    <property type="term" value="C:intracellular membrane-bounded organelle"/>
    <property type="evidence" value="ECO:0000266"/>
    <property type="project" value="RGD"/>
</dbReference>
<dbReference type="GO" id="GO:0016020">
    <property type="term" value="C:membrane"/>
    <property type="evidence" value="ECO:0000266"/>
    <property type="project" value="RGD"/>
</dbReference>
<dbReference type="GO" id="GO:0004028">
    <property type="term" value="F:3-chloroallyl aldehyde dehydrogenase activity"/>
    <property type="evidence" value="ECO:0000314"/>
    <property type="project" value="RGD"/>
</dbReference>
<dbReference type="GO" id="GO:0004029">
    <property type="term" value="F:aldehyde dehydrogenase (NAD+) activity"/>
    <property type="evidence" value="ECO:0000266"/>
    <property type="project" value="RGD"/>
</dbReference>
<dbReference type="GO" id="GO:0050061">
    <property type="term" value="F:long-chain fatty aldehyde dehydrogenase (NAD+) activity"/>
    <property type="evidence" value="ECO:0000250"/>
    <property type="project" value="UniProtKB"/>
</dbReference>
<dbReference type="GO" id="GO:0046577">
    <property type="term" value="F:long-chain-alcohol oxidase activity"/>
    <property type="evidence" value="ECO:0000266"/>
    <property type="project" value="RGD"/>
</dbReference>
<dbReference type="GO" id="GO:0052814">
    <property type="term" value="F:medium-chain fatty aldehyde dehydrogenase (NAD+) activity"/>
    <property type="evidence" value="ECO:0000250"/>
    <property type="project" value="UniProtKB"/>
</dbReference>
<dbReference type="GO" id="GO:0042803">
    <property type="term" value="F:protein homodimerization activity"/>
    <property type="evidence" value="ECO:0000266"/>
    <property type="project" value="RGD"/>
</dbReference>
<dbReference type="GO" id="GO:0006081">
    <property type="term" value="P:aldehyde metabolic process"/>
    <property type="evidence" value="ECO:0000266"/>
    <property type="project" value="RGD"/>
</dbReference>
<dbReference type="GO" id="GO:0007417">
    <property type="term" value="P:central nervous system development"/>
    <property type="evidence" value="ECO:0000266"/>
    <property type="project" value="RGD"/>
</dbReference>
<dbReference type="GO" id="GO:0008544">
    <property type="term" value="P:epidermis development"/>
    <property type="evidence" value="ECO:0000266"/>
    <property type="project" value="RGD"/>
</dbReference>
<dbReference type="GO" id="GO:0006631">
    <property type="term" value="P:fatty acid metabolic process"/>
    <property type="evidence" value="ECO:0007669"/>
    <property type="project" value="UniProtKB-KW"/>
</dbReference>
<dbReference type="GO" id="GO:0046292">
    <property type="term" value="P:formaldehyde metabolic process"/>
    <property type="evidence" value="ECO:0000314"/>
    <property type="project" value="RGD"/>
</dbReference>
<dbReference type="GO" id="GO:0046458">
    <property type="term" value="P:hexadecanal metabolic process"/>
    <property type="evidence" value="ECO:0000250"/>
    <property type="project" value="UniProtKB"/>
</dbReference>
<dbReference type="GO" id="GO:0007422">
    <property type="term" value="P:peripheral nervous system development"/>
    <property type="evidence" value="ECO:0000266"/>
    <property type="project" value="RGD"/>
</dbReference>
<dbReference type="GO" id="GO:0033306">
    <property type="term" value="P:phytol metabolic process"/>
    <property type="evidence" value="ECO:0000266"/>
    <property type="project" value="RGD"/>
</dbReference>
<dbReference type="GO" id="GO:0000302">
    <property type="term" value="P:response to reactive oxygen species"/>
    <property type="evidence" value="ECO:0000314"/>
    <property type="project" value="RGD"/>
</dbReference>
<dbReference type="CDD" id="cd07132">
    <property type="entry name" value="ALDH_F3AB"/>
    <property type="match status" value="1"/>
</dbReference>
<dbReference type="FunFam" id="3.40.309.10:FF:000003">
    <property type="entry name" value="Aldehyde dehydrogenase"/>
    <property type="match status" value="1"/>
</dbReference>
<dbReference type="FunFam" id="3.40.605.10:FF:000004">
    <property type="entry name" value="Aldehyde dehydrogenase"/>
    <property type="match status" value="1"/>
</dbReference>
<dbReference type="Gene3D" id="3.40.605.10">
    <property type="entry name" value="Aldehyde Dehydrogenase, Chain A, domain 1"/>
    <property type="match status" value="1"/>
</dbReference>
<dbReference type="Gene3D" id="3.40.309.10">
    <property type="entry name" value="Aldehyde Dehydrogenase, Chain A, domain 2"/>
    <property type="match status" value="1"/>
</dbReference>
<dbReference type="InterPro" id="IPR016161">
    <property type="entry name" value="Ald_DH/histidinol_DH"/>
</dbReference>
<dbReference type="InterPro" id="IPR016163">
    <property type="entry name" value="Ald_DH_C"/>
</dbReference>
<dbReference type="InterPro" id="IPR016160">
    <property type="entry name" value="Ald_DH_CS_CYS"/>
</dbReference>
<dbReference type="InterPro" id="IPR029510">
    <property type="entry name" value="Ald_DH_CS_GLU"/>
</dbReference>
<dbReference type="InterPro" id="IPR016162">
    <property type="entry name" value="Ald_DH_N"/>
</dbReference>
<dbReference type="InterPro" id="IPR015590">
    <property type="entry name" value="Aldehyde_DH_dom"/>
</dbReference>
<dbReference type="InterPro" id="IPR012394">
    <property type="entry name" value="Aldehyde_DH_NAD(P)"/>
</dbReference>
<dbReference type="PANTHER" id="PTHR43570">
    <property type="entry name" value="ALDEHYDE DEHYDROGENASE"/>
    <property type="match status" value="1"/>
</dbReference>
<dbReference type="PANTHER" id="PTHR43570:SF9">
    <property type="entry name" value="ALDEHYDE DEHYDROGENASE FAMILY 3 MEMBER A2"/>
    <property type="match status" value="1"/>
</dbReference>
<dbReference type="Pfam" id="PF00171">
    <property type="entry name" value="Aldedh"/>
    <property type="match status" value="1"/>
</dbReference>
<dbReference type="PIRSF" id="PIRSF036492">
    <property type="entry name" value="ALDH"/>
    <property type="match status" value="1"/>
</dbReference>
<dbReference type="SUPFAM" id="SSF53720">
    <property type="entry name" value="ALDH-like"/>
    <property type="match status" value="1"/>
</dbReference>
<dbReference type="PROSITE" id="PS00070">
    <property type="entry name" value="ALDEHYDE_DEHYDR_CYS"/>
    <property type="match status" value="1"/>
</dbReference>
<dbReference type="PROSITE" id="PS00687">
    <property type="entry name" value="ALDEHYDE_DEHYDR_GLU"/>
    <property type="match status" value="1"/>
</dbReference>
<protein>
    <recommendedName>
        <fullName>Aldehyde dehydrogenase family 3 member A2</fullName>
        <ecNumber evidence="2">1.2.1.3</ecNumber>
        <ecNumber evidence="3">1.2.1.94</ecNumber>
    </recommendedName>
    <alternativeName>
        <fullName>Aldehyde dehydrogenase 4</fullName>
    </alternativeName>
    <alternativeName>
        <fullName>Fatty aldehyde dehydrogenase</fullName>
    </alternativeName>
    <alternativeName>
        <fullName>Microsomal aldehyde dehydrogenase</fullName>
        <shortName>msALDH</shortName>
    </alternativeName>
</protein>
<name>AL3A2_RAT</name>
<organism>
    <name type="scientific">Rattus norvegicus</name>
    <name type="common">Rat</name>
    <dbReference type="NCBI Taxonomy" id="10116"/>
    <lineage>
        <taxon>Eukaryota</taxon>
        <taxon>Metazoa</taxon>
        <taxon>Chordata</taxon>
        <taxon>Craniata</taxon>
        <taxon>Vertebrata</taxon>
        <taxon>Euteleostomi</taxon>
        <taxon>Mammalia</taxon>
        <taxon>Eutheria</taxon>
        <taxon>Euarchontoglires</taxon>
        <taxon>Glires</taxon>
        <taxon>Rodentia</taxon>
        <taxon>Myomorpha</taxon>
        <taxon>Muroidea</taxon>
        <taxon>Muridae</taxon>
        <taxon>Murinae</taxon>
        <taxon>Rattus</taxon>
    </lineage>
</organism>
<reference key="1">
    <citation type="journal article" date="1991" name="J. Biol. Chem.">
        <title>Molecular cloning, sequencing, and expression of cDNA for rat liver microsomal aldehyde dehydrogenase.</title>
        <authorList>
            <person name="Miyauchi K."/>
            <person name="Masaki R."/>
            <person name="Taketani S."/>
            <person name="Yamamoto A."/>
            <person name="Akayama M."/>
            <person name="Tashiro Y."/>
        </authorList>
    </citation>
    <scope>NUCLEOTIDE SEQUENCE [MRNA]</scope>
    <scope>PROTEIN SEQUENCE OF 93-110; 236-255 AND 408-427</scope>
    <scope>SUBCELLULAR LOCATION</scope>
    <scope>TOPOLOGY</scope>
    <source>
        <tissue>Liver</tissue>
    </source>
</reference>
<proteinExistence type="evidence at protein level"/>
<feature type="chain" id="PRO_0000056476" description="Aldehyde dehydrogenase family 3 member A2">
    <location>
        <begin position="1"/>
        <end position="484"/>
    </location>
</feature>
<feature type="topological domain" description="Cytoplasmic" evidence="7">
    <location>
        <begin position="1"/>
        <end position="463"/>
    </location>
</feature>
<feature type="transmembrane region" description="Helical" evidence="4">
    <location>
        <begin position="464"/>
        <end position="484"/>
    </location>
</feature>
<feature type="short sequence motif" description="Prevents secretion from ER" evidence="1">
    <location>
        <begin position="481"/>
        <end position="484"/>
    </location>
</feature>
<feature type="active site" evidence="5">
    <location>
        <position position="207"/>
    </location>
</feature>
<feature type="active site" evidence="6">
    <location>
        <position position="241"/>
    </location>
</feature>
<feature type="binding site" evidence="4">
    <location>
        <begin position="185"/>
        <end position="190"/>
    </location>
    <ligand>
        <name>NAD(+)</name>
        <dbReference type="ChEBI" id="CHEBI:57540"/>
    </ligand>
</feature>
<feature type="modified residue" description="Phosphoserine" evidence="3">
    <location>
        <position position="293"/>
    </location>
</feature>
<accession>P30839</accession>
<sequence length="484" mass="54082">MERQVQRLRQTFRSGRSRPLRFRLQQLEALRRMVQEREKDILAAIAADLSKSELNAYSHEVITILGEIDFMLGNLPELASARPAKKNLLTMMDEAYVQPEPLGVVLIIGAWNYPFVLTLQPLVGAIAAGNAAIVKPSELSENTAKILAELLPQYLDQDLYMIVNGGVEETTELLRQRFDHILYTGNTAVGKIVMEAAAKHLTPVTLELGGKSPCYIDRDCDLDVACRRITWGKYMNCGQTCIAPDYILCEASSQDQIVQKIKDTVKDFYGENVKASPDYERIINLRHFKRIKSLLEGQKIAFGGETDEATRYIAPTILTDVDPNSKVMQEEIFGPILPIVSVKNVEEAINFINDREKPLALYIFSHNNKLIKRVIDETSSGGVTGNDVIMHFTVNSLPFGGVGASGMGAYHGKYSFDTFSHQRPCLLKGLKGESVNKLRYPPNSESKVSWSKFFLLKQFNKGRLQLLLLVCLVAVAAVIVKDQL</sequence>
<comment type="function">
    <text evidence="3">Catalyzes the oxidation of medium and long-chain aliphatic aldehydes to fatty acids. Active on a variety of saturated and unsaturated aliphatic aldehydes between 6 and 24 carbons in length. Responsible for conversion of the sphingosine 1-phosphate (S1P) degradation product hexadecenal to hexadecenoic acid (By similarity).</text>
</comment>
<comment type="catalytic activity">
    <reaction evidence="3">
        <text>an aldehyde + NAD(+) + H2O = a carboxylate + NADH + 2 H(+)</text>
        <dbReference type="Rhea" id="RHEA:16185"/>
        <dbReference type="ChEBI" id="CHEBI:15377"/>
        <dbReference type="ChEBI" id="CHEBI:15378"/>
        <dbReference type="ChEBI" id="CHEBI:17478"/>
        <dbReference type="ChEBI" id="CHEBI:29067"/>
        <dbReference type="ChEBI" id="CHEBI:57540"/>
        <dbReference type="ChEBI" id="CHEBI:57945"/>
        <dbReference type="EC" id="1.2.1.3"/>
    </reaction>
</comment>
<comment type="catalytic activity">
    <reaction evidence="3">
        <text>a fatty aldehyde + NAD(+) + H2O = a fatty acid + NADH + 2 H(+)</text>
        <dbReference type="Rhea" id="RHEA:49832"/>
        <dbReference type="ChEBI" id="CHEBI:15377"/>
        <dbReference type="ChEBI" id="CHEBI:15378"/>
        <dbReference type="ChEBI" id="CHEBI:28868"/>
        <dbReference type="ChEBI" id="CHEBI:35746"/>
        <dbReference type="ChEBI" id="CHEBI:57540"/>
        <dbReference type="ChEBI" id="CHEBI:57945"/>
    </reaction>
</comment>
<comment type="catalytic activity">
    <reaction evidence="3">
        <text>(2E)-hexadecenal + NAD(+) + H2O = (E)-hexadec-2-enoate + NADH + 2 H(+)</text>
        <dbReference type="Rhea" id="RHEA:36135"/>
        <dbReference type="ChEBI" id="CHEBI:15377"/>
        <dbReference type="ChEBI" id="CHEBI:15378"/>
        <dbReference type="ChEBI" id="CHEBI:17585"/>
        <dbReference type="ChEBI" id="CHEBI:57540"/>
        <dbReference type="ChEBI" id="CHEBI:57945"/>
        <dbReference type="ChEBI" id="CHEBI:72745"/>
    </reaction>
</comment>
<comment type="catalytic activity">
    <reaction evidence="3">
        <text>hexadecanoate + NADH + 2 H(+) = hexadecanal + NAD(+) + H2O</text>
        <dbReference type="Rhea" id="RHEA:33739"/>
        <dbReference type="ChEBI" id="CHEBI:7896"/>
        <dbReference type="ChEBI" id="CHEBI:15377"/>
        <dbReference type="ChEBI" id="CHEBI:15378"/>
        <dbReference type="ChEBI" id="CHEBI:17600"/>
        <dbReference type="ChEBI" id="CHEBI:57540"/>
        <dbReference type="ChEBI" id="CHEBI:57945"/>
    </reaction>
</comment>
<comment type="catalytic activity">
    <reaction evidence="3">
        <text>22-oxodocosanoate + NAD(+) + H2O = docosanedioate + NADH + 2 H(+)</text>
        <dbReference type="Rhea" id="RHEA:39015"/>
        <dbReference type="ChEBI" id="CHEBI:15377"/>
        <dbReference type="ChEBI" id="CHEBI:15378"/>
        <dbReference type="ChEBI" id="CHEBI:57540"/>
        <dbReference type="ChEBI" id="CHEBI:57945"/>
        <dbReference type="ChEBI" id="CHEBI:76298"/>
        <dbReference type="ChEBI" id="CHEBI:76299"/>
    </reaction>
</comment>
<comment type="catalytic activity">
    <reaction evidence="3">
        <text>2,6,10,14-tetramethylpentadecanal + NAD(+) + H2O = 2,6,10,14-tetramethylpentadecanoate + NADH + 2 H(+)</text>
        <dbReference type="Rhea" id="RHEA:44016"/>
        <dbReference type="ChEBI" id="CHEBI:15377"/>
        <dbReference type="ChEBI" id="CHEBI:15378"/>
        <dbReference type="ChEBI" id="CHEBI:49189"/>
        <dbReference type="ChEBI" id="CHEBI:57540"/>
        <dbReference type="ChEBI" id="CHEBI:57945"/>
        <dbReference type="ChEBI" id="CHEBI:77268"/>
    </reaction>
</comment>
<comment type="catalytic activity">
    <reaction evidence="3">
        <text>octadecanal + NAD(+) + H2O = octadecanoate + NADH + 2 H(+)</text>
        <dbReference type="Rhea" id="RHEA:44020"/>
        <dbReference type="ChEBI" id="CHEBI:15377"/>
        <dbReference type="ChEBI" id="CHEBI:15378"/>
        <dbReference type="ChEBI" id="CHEBI:17034"/>
        <dbReference type="ChEBI" id="CHEBI:25629"/>
        <dbReference type="ChEBI" id="CHEBI:57540"/>
        <dbReference type="ChEBI" id="CHEBI:57945"/>
    </reaction>
</comment>
<comment type="catalytic activity">
    <reaction evidence="3">
        <text>dodecanoate + NADH + 2 H(+) = dodecanal + NAD(+) + H2O</text>
        <dbReference type="Rhea" id="RHEA:44168"/>
        <dbReference type="ChEBI" id="CHEBI:15377"/>
        <dbReference type="ChEBI" id="CHEBI:15378"/>
        <dbReference type="ChEBI" id="CHEBI:18262"/>
        <dbReference type="ChEBI" id="CHEBI:27836"/>
        <dbReference type="ChEBI" id="CHEBI:57540"/>
        <dbReference type="ChEBI" id="CHEBI:57945"/>
    </reaction>
</comment>
<comment type="catalytic activity">
    <reaction evidence="3">
        <text>decanal + NAD(+) + H2O = decanoate + NADH + 2 H(+)</text>
        <dbReference type="Rhea" id="RHEA:44104"/>
        <dbReference type="ChEBI" id="CHEBI:15377"/>
        <dbReference type="ChEBI" id="CHEBI:15378"/>
        <dbReference type="ChEBI" id="CHEBI:27689"/>
        <dbReference type="ChEBI" id="CHEBI:31457"/>
        <dbReference type="ChEBI" id="CHEBI:57540"/>
        <dbReference type="ChEBI" id="CHEBI:57945"/>
    </reaction>
</comment>
<comment type="catalytic activity">
    <reaction evidence="3">
        <text>tetradecanal + NAD(+) + H2O = tetradecanoate + NADH + 2 H(+)</text>
        <dbReference type="Rhea" id="RHEA:44172"/>
        <dbReference type="ChEBI" id="CHEBI:15377"/>
        <dbReference type="ChEBI" id="CHEBI:15378"/>
        <dbReference type="ChEBI" id="CHEBI:30807"/>
        <dbReference type="ChEBI" id="CHEBI:57540"/>
        <dbReference type="ChEBI" id="CHEBI:57945"/>
        <dbReference type="ChEBI" id="CHEBI:84067"/>
    </reaction>
</comment>
<comment type="catalytic activity">
    <reaction evidence="3">
        <text>octanal + NAD(+) + H2O = octanoate + NADH + 2 H(+)</text>
        <dbReference type="Rhea" id="RHEA:44100"/>
        <dbReference type="ChEBI" id="CHEBI:15377"/>
        <dbReference type="ChEBI" id="CHEBI:15378"/>
        <dbReference type="ChEBI" id="CHEBI:17935"/>
        <dbReference type="ChEBI" id="CHEBI:25646"/>
        <dbReference type="ChEBI" id="CHEBI:57540"/>
        <dbReference type="ChEBI" id="CHEBI:57945"/>
    </reaction>
</comment>
<comment type="catalytic activity">
    <reaction evidence="3">
        <text>heptanal + NAD(+) + H2O = heptanoate + NADH + 2 H(+)</text>
        <dbReference type="Rhea" id="RHEA:44108"/>
        <dbReference type="ChEBI" id="CHEBI:15377"/>
        <dbReference type="ChEBI" id="CHEBI:15378"/>
        <dbReference type="ChEBI" id="CHEBI:32362"/>
        <dbReference type="ChEBI" id="CHEBI:34787"/>
        <dbReference type="ChEBI" id="CHEBI:57540"/>
        <dbReference type="ChEBI" id="CHEBI:57945"/>
    </reaction>
</comment>
<comment type="catalytic activity">
    <reaction evidence="3">
        <text>(2E,6E)-farnesal + NAD(+) + H2O = (2E,6E)-farnesoate + NADH + 2 H(+)</text>
        <dbReference type="Rhea" id="RHEA:24216"/>
        <dbReference type="ChEBI" id="CHEBI:15377"/>
        <dbReference type="ChEBI" id="CHEBI:15378"/>
        <dbReference type="ChEBI" id="CHEBI:15894"/>
        <dbReference type="ChEBI" id="CHEBI:57540"/>
        <dbReference type="ChEBI" id="CHEBI:57945"/>
        <dbReference type="ChEBI" id="CHEBI:83276"/>
        <dbReference type="EC" id="1.2.1.94"/>
    </reaction>
</comment>
<comment type="subunit">
    <text evidence="3">Homodimer.</text>
</comment>
<comment type="subcellular location">
    <subcellularLocation>
        <location evidence="7">Microsome membrane</location>
    </subcellularLocation>
    <subcellularLocation>
        <location evidence="7">Endoplasmic reticulum membrane</location>
        <topology evidence="9">Single-pass membrane protein</topology>
        <orientation evidence="7">Cytoplasmic side</orientation>
    </subcellularLocation>
</comment>
<comment type="PTM">
    <text evidence="7">The N-terminus is blocked.</text>
</comment>
<comment type="similarity">
    <text evidence="8">Belongs to the aldehyde dehydrogenase family.</text>
</comment>